<proteinExistence type="evidence at protein level"/>
<protein>
    <recommendedName>
        <fullName>Peroxisomal sarcosine oxidase</fullName>
        <shortName>PSO</shortName>
        <ecNumber>1.5.3.1</ecNumber>
        <ecNumber>1.5.3.7</ecNumber>
    </recommendedName>
    <alternativeName>
        <fullName>L-pipecolate oxidase</fullName>
    </alternativeName>
    <alternativeName>
        <fullName>L-pipecolic acid oxidase</fullName>
    </alternativeName>
</protein>
<reference key="1">
    <citation type="journal article" date="1997" name="Genomics">
        <title>A mammalian homolog of the bacterial monomeric sarcosine oxidases maps to mouse chromosome 11, close to Cryba1.</title>
        <authorList>
            <person name="Herbst R."/>
            <person name="Barton J.L."/>
            <person name="Nicklin M.J.H."/>
        </authorList>
    </citation>
    <scope>NUCLEOTIDE SEQUENCE [MRNA]</scope>
    <source>
        <tissue>Embryo</tissue>
    </source>
</reference>
<reference key="2">
    <citation type="journal article" date="2005" name="Science">
        <title>The transcriptional landscape of the mammalian genome.</title>
        <authorList>
            <person name="Carninci P."/>
            <person name="Kasukawa T."/>
            <person name="Katayama S."/>
            <person name="Gough J."/>
            <person name="Frith M.C."/>
            <person name="Maeda N."/>
            <person name="Oyama R."/>
            <person name="Ravasi T."/>
            <person name="Lenhard B."/>
            <person name="Wells C."/>
            <person name="Kodzius R."/>
            <person name="Shimokawa K."/>
            <person name="Bajic V.B."/>
            <person name="Brenner S.E."/>
            <person name="Batalov S."/>
            <person name="Forrest A.R."/>
            <person name="Zavolan M."/>
            <person name="Davis M.J."/>
            <person name="Wilming L.G."/>
            <person name="Aidinis V."/>
            <person name="Allen J.E."/>
            <person name="Ambesi-Impiombato A."/>
            <person name="Apweiler R."/>
            <person name="Aturaliya R.N."/>
            <person name="Bailey T.L."/>
            <person name="Bansal M."/>
            <person name="Baxter L."/>
            <person name="Beisel K.W."/>
            <person name="Bersano T."/>
            <person name="Bono H."/>
            <person name="Chalk A.M."/>
            <person name="Chiu K.P."/>
            <person name="Choudhary V."/>
            <person name="Christoffels A."/>
            <person name="Clutterbuck D.R."/>
            <person name="Crowe M.L."/>
            <person name="Dalla E."/>
            <person name="Dalrymple B.P."/>
            <person name="de Bono B."/>
            <person name="Della Gatta G."/>
            <person name="di Bernardo D."/>
            <person name="Down T."/>
            <person name="Engstrom P."/>
            <person name="Fagiolini M."/>
            <person name="Faulkner G."/>
            <person name="Fletcher C.F."/>
            <person name="Fukushima T."/>
            <person name="Furuno M."/>
            <person name="Futaki S."/>
            <person name="Gariboldi M."/>
            <person name="Georgii-Hemming P."/>
            <person name="Gingeras T.R."/>
            <person name="Gojobori T."/>
            <person name="Green R.E."/>
            <person name="Gustincich S."/>
            <person name="Harbers M."/>
            <person name="Hayashi Y."/>
            <person name="Hensch T.K."/>
            <person name="Hirokawa N."/>
            <person name="Hill D."/>
            <person name="Huminiecki L."/>
            <person name="Iacono M."/>
            <person name="Ikeo K."/>
            <person name="Iwama A."/>
            <person name="Ishikawa T."/>
            <person name="Jakt M."/>
            <person name="Kanapin A."/>
            <person name="Katoh M."/>
            <person name="Kawasawa Y."/>
            <person name="Kelso J."/>
            <person name="Kitamura H."/>
            <person name="Kitano H."/>
            <person name="Kollias G."/>
            <person name="Krishnan S.P."/>
            <person name="Kruger A."/>
            <person name="Kummerfeld S.K."/>
            <person name="Kurochkin I.V."/>
            <person name="Lareau L.F."/>
            <person name="Lazarevic D."/>
            <person name="Lipovich L."/>
            <person name="Liu J."/>
            <person name="Liuni S."/>
            <person name="McWilliam S."/>
            <person name="Madan Babu M."/>
            <person name="Madera M."/>
            <person name="Marchionni L."/>
            <person name="Matsuda H."/>
            <person name="Matsuzawa S."/>
            <person name="Miki H."/>
            <person name="Mignone F."/>
            <person name="Miyake S."/>
            <person name="Morris K."/>
            <person name="Mottagui-Tabar S."/>
            <person name="Mulder N."/>
            <person name="Nakano N."/>
            <person name="Nakauchi H."/>
            <person name="Ng P."/>
            <person name="Nilsson R."/>
            <person name="Nishiguchi S."/>
            <person name="Nishikawa S."/>
            <person name="Nori F."/>
            <person name="Ohara O."/>
            <person name="Okazaki Y."/>
            <person name="Orlando V."/>
            <person name="Pang K.C."/>
            <person name="Pavan W.J."/>
            <person name="Pavesi G."/>
            <person name="Pesole G."/>
            <person name="Petrovsky N."/>
            <person name="Piazza S."/>
            <person name="Reed J."/>
            <person name="Reid J.F."/>
            <person name="Ring B.Z."/>
            <person name="Ringwald M."/>
            <person name="Rost B."/>
            <person name="Ruan Y."/>
            <person name="Salzberg S.L."/>
            <person name="Sandelin A."/>
            <person name="Schneider C."/>
            <person name="Schoenbach C."/>
            <person name="Sekiguchi K."/>
            <person name="Semple C.A."/>
            <person name="Seno S."/>
            <person name="Sessa L."/>
            <person name="Sheng Y."/>
            <person name="Shibata Y."/>
            <person name="Shimada H."/>
            <person name="Shimada K."/>
            <person name="Silva D."/>
            <person name="Sinclair B."/>
            <person name="Sperling S."/>
            <person name="Stupka E."/>
            <person name="Sugiura K."/>
            <person name="Sultana R."/>
            <person name="Takenaka Y."/>
            <person name="Taki K."/>
            <person name="Tammoja K."/>
            <person name="Tan S.L."/>
            <person name="Tang S."/>
            <person name="Taylor M.S."/>
            <person name="Tegner J."/>
            <person name="Teichmann S.A."/>
            <person name="Ueda H.R."/>
            <person name="van Nimwegen E."/>
            <person name="Verardo R."/>
            <person name="Wei C.L."/>
            <person name="Yagi K."/>
            <person name="Yamanishi H."/>
            <person name="Zabarovsky E."/>
            <person name="Zhu S."/>
            <person name="Zimmer A."/>
            <person name="Hide W."/>
            <person name="Bult C."/>
            <person name="Grimmond S.M."/>
            <person name="Teasdale R.D."/>
            <person name="Liu E.T."/>
            <person name="Brusic V."/>
            <person name="Quackenbush J."/>
            <person name="Wahlestedt C."/>
            <person name="Mattick J.S."/>
            <person name="Hume D.A."/>
            <person name="Kai C."/>
            <person name="Sasaki D."/>
            <person name="Tomaru Y."/>
            <person name="Fukuda S."/>
            <person name="Kanamori-Katayama M."/>
            <person name="Suzuki M."/>
            <person name="Aoki J."/>
            <person name="Arakawa T."/>
            <person name="Iida J."/>
            <person name="Imamura K."/>
            <person name="Itoh M."/>
            <person name="Kato T."/>
            <person name="Kawaji H."/>
            <person name="Kawagashira N."/>
            <person name="Kawashima T."/>
            <person name="Kojima M."/>
            <person name="Kondo S."/>
            <person name="Konno H."/>
            <person name="Nakano K."/>
            <person name="Ninomiya N."/>
            <person name="Nishio T."/>
            <person name="Okada M."/>
            <person name="Plessy C."/>
            <person name="Shibata K."/>
            <person name="Shiraki T."/>
            <person name="Suzuki S."/>
            <person name="Tagami M."/>
            <person name="Waki K."/>
            <person name="Watahiki A."/>
            <person name="Okamura-Oho Y."/>
            <person name="Suzuki H."/>
            <person name="Kawai J."/>
            <person name="Hayashizaki Y."/>
        </authorList>
    </citation>
    <scope>NUCLEOTIDE SEQUENCE [LARGE SCALE MRNA]</scope>
    <source>
        <strain>C57BL/6J</strain>
        <tissue>Small intestine</tissue>
    </source>
</reference>
<reference key="3">
    <citation type="journal article" date="2004" name="Genome Res.">
        <title>The status, quality, and expansion of the NIH full-length cDNA project: the Mammalian Gene Collection (MGC).</title>
        <authorList>
            <consortium name="The MGC Project Team"/>
        </authorList>
    </citation>
    <scope>NUCLEOTIDE SEQUENCE [LARGE SCALE MRNA]</scope>
    <source>
        <tissue>Kidney</tissue>
    </source>
</reference>
<reference key="4">
    <citation type="journal article" date="2010" name="Cell">
        <title>A tissue-specific atlas of mouse protein phosphorylation and expression.</title>
        <authorList>
            <person name="Huttlin E.L."/>
            <person name="Jedrychowski M.P."/>
            <person name="Elias J.E."/>
            <person name="Goswami T."/>
            <person name="Rad R."/>
            <person name="Beausoleil S.A."/>
            <person name="Villen J."/>
            <person name="Haas W."/>
            <person name="Sowa M.E."/>
            <person name="Gygi S.P."/>
        </authorList>
    </citation>
    <scope>IDENTIFICATION BY MASS SPECTROMETRY [LARGE SCALE ANALYSIS]</scope>
    <source>
        <tissue>Kidney</tissue>
        <tissue>Liver</tissue>
    </source>
</reference>
<reference key="5">
    <citation type="journal article" date="2013" name="Proc. Natl. Acad. Sci. U.S.A.">
        <title>Label-free quantitative proteomics of the lysine acetylome in mitochondria identifies substrates of SIRT3 in metabolic pathways.</title>
        <authorList>
            <person name="Rardin M.J."/>
            <person name="Newman J.C."/>
            <person name="Held J.M."/>
            <person name="Cusack M.P."/>
            <person name="Sorensen D.J."/>
            <person name="Li B."/>
            <person name="Schilling B."/>
            <person name="Mooney S.D."/>
            <person name="Kahn C.R."/>
            <person name="Verdin E."/>
            <person name="Gibson B.W."/>
        </authorList>
    </citation>
    <scope>ACETYLATION [LARGE SCALE ANALYSIS] AT LYS-126 AND LYS-287</scope>
    <scope>IDENTIFICATION BY MASS SPECTROMETRY [LARGE SCALE ANALYSIS]</scope>
    <source>
        <tissue>Liver</tissue>
    </source>
</reference>
<dbReference type="EC" id="1.5.3.1"/>
<dbReference type="EC" id="1.5.3.7"/>
<dbReference type="EMBL" id="U94700">
    <property type="protein sequence ID" value="AAC39948.1"/>
    <property type="molecule type" value="mRNA"/>
</dbReference>
<dbReference type="EMBL" id="AK008555">
    <property type="protein sequence ID" value="BAB25741.1"/>
    <property type="molecule type" value="mRNA"/>
</dbReference>
<dbReference type="EMBL" id="BC013525">
    <property type="protein sequence ID" value="AAH13525.1"/>
    <property type="molecule type" value="mRNA"/>
</dbReference>
<dbReference type="CCDS" id="CCDS25086.1"/>
<dbReference type="RefSeq" id="NP_032978.2">
    <property type="nucleotide sequence ID" value="NM_008952.2"/>
</dbReference>
<dbReference type="SMR" id="Q9D826"/>
<dbReference type="FunCoup" id="Q9D826">
    <property type="interactions" value="432"/>
</dbReference>
<dbReference type="STRING" id="10090.ENSMUSP00000017597"/>
<dbReference type="GlyGen" id="Q9D826">
    <property type="glycosylation" value="1 site, 1 O-linked glycan (1 site)"/>
</dbReference>
<dbReference type="iPTMnet" id="Q9D826"/>
<dbReference type="PhosphoSitePlus" id="Q9D826"/>
<dbReference type="SwissPalm" id="Q9D826"/>
<dbReference type="jPOST" id="Q9D826"/>
<dbReference type="PaxDb" id="10090-ENSMUSP00000017597"/>
<dbReference type="ProteomicsDB" id="257380"/>
<dbReference type="Antibodypedia" id="2669">
    <property type="antibodies" value="111 antibodies from 24 providers"/>
</dbReference>
<dbReference type="DNASU" id="19193"/>
<dbReference type="Ensembl" id="ENSMUST00000017597.5">
    <property type="protein sequence ID" value="ENSMUSP00000017597.5"/>
    <property type="gene ID" value="ENSMUSG00000017453.5"/>
</dbReference>
<dbReference type="GeneID" id="19193"/>
<dbReference type="KEGG" id="mmu:19193"/>
<dbReference type="UCSC" id="uc007khm.2">
    <property type="organism name" value="mouse"/>
</dbReference>
<dbReference type="AGR" id="MGI:1197006"/>
<dbReference type="CTD" id="51268"/>
<dbReference type="MGI" id="MGI:1197006">
    <property type="gene designation" value="Pipox"/>
</dbReference>
<dbReference type="VEuPathDB" id="HostDB:ENSMUSG00000017453"/>
<dbReference type="eggNOG" id="KOG2820">
    <property type="taxonomic scope" value="Eukaryota"/>
</dbReference>
<dbReference type="GeneTree" id="ENSGT00390000011000"/>
<dbReference type="HOGENOM" id="CLU_007884_2_2_1"/>
<dbReference type="InParanoid" id="Q9D826"/>
<dbReference type="OMA" id="FPSMWFQ"/>
<dbReference type="OrthoDB" id="424974at2759"/>
<dbReference type="PhylomeDB" id="Q9D826"/>
<dbReference type="TreeFam" id="TF313837"/>
<dbReference type="Reactome" id="R-MMU-71064">
    <property type="pathway name" value="Lysine catabolism"/>
</dbReference>
<dbReference type="Reactome" id="R-MMU-9033241">
    <property type="pathway name" value="Peroxisomal protein import"/>
</dbReference>
<dbReference type="BioGRID-ORCS" id="19193">
    <property type="hits" value="2 hits in 79 CRISPR screens"/>
</dbReference>
<dbReference type="PRO" id="PR:Q9D826"/>
<dbReference type="Proteomes" id="UP000000589">
    <property type="component" value="Chromosome 11"/>
</dbReference>
<dbReference type="RNAct" id="Q9D826">
    <property type="molecule type" value="protein"/>
</dbReference>
<dbReference type="Bgee" id="ENSMUSG00000017453">
    <property type="expression patterns" value="Expressed in right kidney and 107 other cell types or tissues"/>
</dbReference>
<dbReference type="ExpressionAtlas" id="Q9D826">
    <property type="expression patterns" value="baseline and differential"/>
</dbReference>
<dbReference type="GO" id="GO:0005777">
    <property type="term" value="C:peroxisome"/>
    <property type="evidence" value="ECO:0000314"/>
    <property type="project" value="HGNC-UCL"/>
</dbReference>
<dbReference type="GO" id="GO:0050660">
    <property type="term" value="F:flavin adenine dinucleotide binding"/>
    <property type="evidence" value="ECO:0007669"/>
    <property type="project" value="InterPro"/>
</dbReference>
<dbReference type="GO" id="GO:0050031">
    <property type="term" value="F:L-pipecolate oxidase activity"/>
    <property type="evidence" value="ECO:0000250"/>
    <property type="project" value="UniProtKB"/>
</dbReference>
<dbReference type="GO" id="GO:0008115">
    <property type="term" value="F:sarcosine oxidase activity"/>
    <property type="evidence" value="ECO:0000250"/>
    <property type="project" value="UniProtKB"/>
</dbReference>
<dbReference type="GO" id="GO:0033514">
    <property type="term" value="P:L-lysine catabolic process to acetyl-CoA via L-pipecolate"/>
    <property type="evidence" value="ECO:0000250"/>
    <property type="project" value="UniProtKB"/>
</dbReference>
<dbReference type="FunFam" id="3.50.50.60:FF:000189">
    <property type="entry name" value="Monomeric sarcosine oxidase"/>
    <property type="match status" value="1"/>
</dbReference>
<dbReference type="Gene3D" id="3.30.9.10">
    <property type="entry name" value="D-Amino Acid Oxidase, subunit A, domain 2"/>
    <property type="match status" value="1"/>
</dbReference>
<dbReference type="Gene3D" id="3.50.50.60">
    <property type="entry name" value="FAD/NAD(P)-binding domain"/>
    <property type="match status" value="1"/>
</dbReference>
<dbReference type="InterPro" id="IPR006076">
    <property type="entry name" value="FAD-dep_OxRdtase"/>
</dbReference>
<dbReference type="InterPro" id="IPR036188">
    <property type="entry name" value="FAD/NAD-bd_sf"/>
</dbReference>
<dbReference type="InterPro" id="IPR045170">
    <property type="entry name" value="MTOX"/>
</dbReference>
<dbReference type="NCBIfam" id="NF008425">
    <property type="entry name" value="PRK11259.1"/>
    <property type="match status" value="1"/>
</dbReference>
<dbReference type="NCBIfam" id="TIGR01377">
    <property type="entry name" value="soxA_mon"/>
    <property type="match status" value="1"/>
</dbReference>
<dbReference type="PANTHER" id="PTHR10961">
    <property type="entry name" value="PEROXISOMAL SARCOSINE OXIDASE"/>
    <property type="match status" value="1"/>
</dbReference>
<dbReference type="PANTHER" id="PTHR10961:SF46">
    <property type="entry name" value="PEROXISOMAL SARCOSINE OXIDASE"/>
    <property type="match status" value="1"/>
</dbReference>
<dbReference type="Pfam" id="PF01266">
    <property type="entry name" value="DAO"/>
    <property type="match status" value="1"/>
</dbReference>
<dbReference type="SUPFAM" id="SSF54373">
    <property type="entry name" value="FAD-linked reductases, C-terminal domain"/>
    <property type="match status" value="1"/>
</dbReference>
<dbReference type="SUPFAM" id="SSF51905">
    <property type="entry name" value="FAD/NAD(P)-binding domain"/>
    <property type="match status" value="1"/>
</dbReference>
<evidence type="ECO:0000250" key="1"/>
<evidence type="ECO:0000255" key="2"/>
<evidence type="ECO:0000305" key="3"/>
<evidence type="ECO:0007744" key="4">
    <source>
    </source>
</evidence>
<feature type="chain" id="PRO_0000213774" description="Peroxisomal sarcosine oxidase">
    <location>
        <begin position="1"/>
        <end position="390"/>
    </location>
</feature>
<feature type="short sequence motif" description="Microbody targeting signal" evidence="2">
    <location>
        <begin position="388"/>
        <end position="390"/>
    </location>
</feature>
<feature type="binding site" evidence="2">
    <location>
        <begin position="9"/>
        <end position="39"/>
    </location>
    <ligand>
        <name>FAD</name>
        <dbReference type="ChEBI" id="CHEBI:57692"/>
    </ligand>
</feature>
<feature type="modified residue" description="N6-acetyllysine" evidence="4">
    <location>
        <position position="126"/>
    </location>
</feature>
<feature type="modified residue" description="N6-acetyllysine" evidence="4">
    <location>
        <position position="287"/>
    </location>
</feature>
<feature type="modified residue" description="S-8alpha-FAD cysteine" evidence="3">
    <location>
        <position position="319"/>
    </location>
</feature>
<feature type="sequence conflict" description="In Ref. 1; AAC39948." evidence="3" ref="1">
    <original>Q</original>
    <variation>H</variation>
    <location>
        <position position="164"/>
    </location>
</feature>
<feature type="sequence conflict" description="In Ref. 1; AAC39948." evidence="3" ref="1">
    <original>C</original>
    <variation>W</variation>
    <location>
        <position position="333"/>
    </location>
</feature>
<feature type="sequence conflict" description="In Ref. 1; AAC39948." evidence="3" ref="1">
    <original>K</original>
    <variation>T</variation>
    <location>
        <position position="352"/>
    </location>
</feature>
<comment type="function">
    <text evidence="1">Metabolizes sarcosine, L-pipecolic acid and L-proline.</text>
</comment>
<comment type="catalytic activity">
    <reaction>
        <text>sarcosine + O2 + H2O = formaldehyde + glycine + H2O2</text>
        <dbReference type="Rhea" id="RHEA:13313"/>
        <dbReference type="ChEBI" id="CHEBI:15377"/>
        <dbReference type="ChEBI" id="CHEBI:15379"/>
        <dbReference type="ChEBI" id="CHEBI:16240"/>
        <dbReference type="ChEBI" id="CHEBI:16842"/>
        <dbReference type="ChEBI" id="CHEBI:57305"/>
        <dbReference type="ChEBI" id="CHEBI:57433"/>
        <dbReference type="EC" id="1.5.3.1"/>
    </reaction>
</comment>
<comment type="catalytic activity">
    <reaction>
        <text>L-pipecolate + O2 = L-1-piperideine-6-carboxylate + H2O2 + H(+)</text>
        <dbReference type="Rhea" id="RHEA:11992"/>
        <dbReference type="ChEBI" id="CHEBI:15378"/>
        <dbReference type="ChEBI" id="CHEBI:15379"/>
        <dbReference type="ChEBI" id="CHEBI:16240"/>
        <dbReference type="ChEBI" id="CHEBI:58769"/>
        <dbReference type="ChEBI" id="CHEBI:61185"/>
        <dbReference type="EC" id="1.5.3.7"/>
    </reaction>
</comment>
<comment type="cofactor">
    <cofactor>
        <name>FAD</name>
        <dbReference type="ChEBI" id="CHEBI:57692"/>
    </cofactor>
    <text>Binds 1 FAD per subunit.</text>
</comment>
<comment type="subcellular location">
    <subcellularLocation>
        <location evidence="1">Peroxisome</location>
    </subcellularLocation>
</comment>
<comment type="tissue specificity">
    <text>Kidney and liver.</text>
</comment>
<comment type="similarity">
    <text evidence="3">Belongs to the MSOX/MTOX family.</text>
</comment>
<gene>
    <name type="primary">Pipox</name>
    <name type="synonym">Pso</name>
</gene>
<organism>
    <name type="scientific">Mus musculus</name>
    <name type="common">Mouse</name>
    <dbReference type="NCBI Taxonomy" id="10090"/>
    <lineage>
        <taxon>Eukaryota</taxon>
        <taxon>Metazoa</taxon>
        <taxon>Chordata</taxon>
        <taxon>Craniata</taxon>
        <taxon>Vertebrata</taxon>
        <taxon>Euteleostomi</taxon>
        <taxon>Mammalia</taxon>
        <taxon>Eutheria</taxon>
        <taxon>Euarchontoglires</taxon>
        <taxon>Glires</taxon>
        <taxon>Rodentia</taxon>
        <taxon>Myomorpha</taxon>
        <taxon>Muroidea</taxon>
        <taxon>Muridae</taxon>
        <taxon>Murinae</taxon>
        <taxon>Mus</taxon>
        <taxon>Mus</taxon>
    </lineage>
</organism>
<accession>Q9D826</accession>
<accession>O55223</accession>
<sequence>MAAQTDFWDAIVIGAGIQGCFTAYHLAKHSKSVLLLEQFFLPHSRGSSHGQSRIIRKAYPEDFYTMMMKECYQTWAQLEREAGTQLHRQTELLLLGTKENPGLKTIQATLSRQGIDHEYLSSVDLKQRFPNIRFTRGEVGLLDKTGGVLYADKALRALQHIICQLGGTVCDGEKVVEIRPGLPVTVKTTLKSYQANSLVITAGPWTNRLLHPLGIELPLQTLRINVCYWREKVPGSYGVSQAFPCILGLDLAPHHIYGLPASEYPGLMKICYHHGDNVDPEERDCPKTFSDIQDVQILCHFVRDHLPGLRAEPDIMERCMYTNTPDEHFILDCHPKYDNIVIGAGFSGHGFKLAPVVGKILYELSMKLPPSYDLAPFRMSRFSTLSKAHL</sequence>
<keyword id="KW-0007">Acetylation</keyword>
<keyword id="KW-0274">FAD</keyword>
<keyword id="KW-0285">Flavoprotein</keyword>
<keyword id="KW-0560">Oxidoreductase</keyword>
<keyword id="KW-0576">Peroxisome</keyword>
<keyword id="KW-1185">Reference proteome</keyword>
<name>SOX_MOUSE</name>